<reference key="1">
    <citation type="journal article" date="2008" name="PLoS ONE">
        <title>Genome biology of Actinobacillus pleuropneumoniae JL03, an isolate of serotype 3 prevalent in China.</title>
        <authorList>
            <person name="Xu Z."/>
            <person name="Zhou Y."/>
            <person name="Li L."/>
            <person name="Zhou R."/>
            <person name="Xiao S."/>
            <person name="Wan Y."/>
            <person name="Zhang S."/>
            <person name="Wang K."/>
            <person name="Li W."/>
            <person name="Li L."/>
            <person name="Jin H."/>
            <person name="Kang M."/>
            <person name="Dalai B."/>
            <person name="Li T."/>
            <person name="Liu L."/>
            <person name="Cheng Y."/>
            <person name="Zhang L."/>
            <person name="Xu T."/>
            <person name="Zheng H."/>
            <person name="Pu S."/>
            <person name="Wang B."/>
            <person name="Gu W."/>
            <person name="Zhang X.L."/>
            <person name="Zhu G.-F."/>
            <person name="Wang S."/>
            <person name="Zhao G.-P."/>
            <person name="Chen H."/>
        </authorList>
    </citation>
    <scope>NUCLEOTIDE SEQUENCE [LARGE SCALE GENOMIC DNA]</scope>
    <source>
        <strain>JL03</strain>
    </source>
</reference>
<organism>
    <name type="scientific">Actinobacillus pleuropneumoniae serotype 3 (strain JL03)</name>
    <dbReference type="NCBI Taxonomy" id="434271"/>
    <lineage>
        <taxon>Bacteria</taxon>
        <taxon>Pseudomonadati</taxon>
        <taxon>Pseudomonadota</taxon>
        <taxon>Gammaproteobacteria</taxon>
        <taxon>Pasteurellales</taxon>
        <taxon>Pasteurellaceae</taxon>
        <taxon>Actinobacillus</taxon>
    </lineage>
</organism>
<accession>B0BUD9</accession>
<dbReference type="EMBL" id="CP000687">
    <property type="protein sequence ID" value="ABY69144.1"/>
    <property type="molecule type" value="Genomic_DNA"/>
</dbReference>
<dbReference type="RefSeq" id="WP_012262865.1">
    <property type="nucleotide sequence ID" value="NC_010278.1"/>
</dbReference>
<dbReference type="SMR" id="B0BUD9"/>
<dbReference type="KEGG" id="apj:APJL_0574"/>
<dbReference type="HOGENOM" id="CLU_004430_0_0_6"/>
<dbReference type="Proteomes" id="UP000008547">
    <property type="component" value="Chromosome"/>
</dbReference>
<dbReference type="GO" id="GO:0005737">
    <property type="term" value="C:cytoplasm"/>
    <property type="evidence" value="ECO:0007669"/>
    <property type="project" value="UniProtKB-UniRule"/>
</dbReference>
<dbReference type="GO" id="GO:0009295">
    <property type="term" value="C:nucleoid"/>
    <property type="evidence" value="ECO:0007669"/>
    <property type="project" value="UniProtKB-SubCell"/>
</dbReference>
<dbReference type="GO" id="GO:0005524">
    <property type="term" value="F:ATP binding"/>
    <property type="evidence" value="ECO:0007669"/>
    <property type="project" value="UniProtKB-UniRule"/>
</dbReference>
<dbReference type="GO" id="GO:0003677">
    <property type="term" value="F:DNA binding"/>
    <property type="evidence" value="ECO:0007669"/>
    <property type="project" value="UniProtKB-UniRule"/>
</dbReference>
<dbReference type="GO" id="GO:0051301">
    <property type="term" value="P:cell division"/>
    <property type="evidence" value="ECO:0007669"/>
    <property type="project" value="UniProtKB-KW"/>
</dbReference>
<dbReference type="GO" id="GO:0030261">
    <property type="term" value="P:chromosome condensation"/>
    <property type="evidence" value="ECO:0007669"/>
    <property type="project" value="UniProtKB-KW"/>
</dbReference>
<dbReference type="GO" id="GO:0007059">
    <property type="term" value="P:chromosome segregation"/>
    <property type="evidence" value="ECO:0007669"/>
    <property type="project" value="UniProtKB-UniRule"/>
</dbReference>
<dbReference type="GO" id="GO:0006260">
    <property type="term" value="P:DNA replication"/>
    <property type="evidence" value="ECO:0007669"/>
    <property type="project" value="UniProtKB-UniRule"/>
</dbReference>
<dbReference type="Gene3D" id="1.20.58.850">
    <property type="match status" value="1"/>
</dbReference>
<dbReference type="Gene3D" id="3.40.1140.10">
    <property type="match status" value="2"/>
</dbReference>
<dbReference type="Gene3D" id="1.20.5.420">
    <property type="entry name" value="Immunoglobulin FC, subunit C"/>
    <property type="match status" value="1"/>
</dbReference>
<dbReference type="Gene3D" id="3.30.70.3500">
    <property type="entry name" value="MukB, hinge domain"/>
    <property type="match status" value="1"/>
</dbReference>
<dbReference type="HAMAP" id="MF_01800">
    <property type="entry name" value="MukB"/>
    <property type="match status" value="1"/>
</dbReference>
<dbReference type="InterPro" id="IPR012090">
    <property type="entry name" value="MukB"/>
</dbReference>
<dbReference type="InterPro" id="IPR050308">
    <property type="entry name" value="MukB/SMC"/>
</dbReference>
<dbReference type="InterPro" id="IPR032520">
    <property type="entry name" value="MukB_hinge"/>
</dbReference>
<dbReference type="InterPro" id="IPR042501">
    <property type="entry name" value="MukB_hinge_sf"/>
</dbReference>
<dbReference type="InterPro" id="IPR007406">
    <property type="entry name" value="MukB_N_dom"/>
</dbReference>
<dbReference type="InterPro" id="IPR027417">
    <property type="entry name" value="P-loop_NTPase"/>
</dbReference>
<dbReference type="NCBIfam" id="NF003422">
    <property type="entry name" value="PRK04863.1"/>
    <property type="match status" value="1"/>
</dbReference>
<dbReference type="PANTHER" id="PTHR42963">
    <property type="entry name" value="CHROMOSOME PARTITION PROTEIN MUKB"/>
    <property type="match status" value="1"/>
</dbReference>
<dbReference type="PANTHER" id="PTHR42963:SF1">
    <property type="entry name" value="DUF4476 DOMAIN-CONTAINING PROTEIN"/>
    <property type="match status" value="1"/>
</dbReference>
<dbReference type="Pfam" id="PF04310">
    <property type="entry name" value="MukB"/>
    <property type="match status" value="1"/>
</dbReference>
<dbReference type="Pfam" id="PF16330">
    <property type="entry name" value="MukB_hinge"/>
    <property type="match status" value="1"/>
</dbReference>
<dbReference type="Pfam" id="PF13558">
    <property type="entry name" value="SbcC_Walker_B"/>
    <property type="match status" value="1"/>
</dbReference>
<dbReference type="PIRSF" id="PIRSF005246">
    <property type="entry name" value="MukB"/>
    <property type="match status" value="1"/>
</dbReference>
<dbReference type="SUPFAM" id="SSF52540">
    <property type="entry name" value="P-loop containing nucleoside triphosphate hydrolases"/>
    <property type="match status" value="1"/>
</dbReference>
<comment type="function">
    <text evidence="1">Plays a central role in chromosome condensation, segregation and cell cycle progression. Functions as a homodimer, which is essential for chromosome partition. Involved in negative DNA supercoiling in vivo, and by this means organize and compact chromosomes. May achieve or facilitate chromosome segregation by condensation DNA from both sides of a centrally located replisome during cell division.</text>
</comment>
<comment type="subunit">
    <text evidence="1">Homodimerization via its hinge domain. Binds to DNA via its C-terminal region. Interacts, and probably forms a ternary complex, with MukE and MukF via its C-terminal region. The complex formation is stimulated by calcium or magnesium. Interacts with tubulin-related protein FtsZ.</text>
</comment>
<comment type="subcellular location">
    <subcellularLocation>
        <location evidence="1">Cytoplasm</location>
        <location evidence="1">Nucleoid</location>
    </subcellularLocation>
    <text evidence="1">Restricted to the nucleoid region.</text>
</comment>
<comment type="domain">
    <text evidence="1">The hinge domain, which separates the large intramolecular coiled coil regions, allows the homodimerization, forming a V-shaped homodimer.</text>
</comment>
<comment type="similarity">
    <text evidence="1">Belongs to the SMC family. MukB subfamily.</text>
</comment>
<evidence type="ECO:0000255" key="1">
    <source>
        <dbReference type="HAMAP-Rule" id="MF_01800"/>
    </source>
</evidence>
<evidence type="ECO:0000256" key="2">
    <source>
        <dbReference type="SAM" id="MobiDB-lite"/>
    </source>
</evidence>
<keyword id="KW-0067">ATP-binding</keyword>
<keyword id="KW-0131">Cell cycle</keyword>
<keyword id="KW-0132">Cell division</keyword>
<keyword id="KW-0159">Chromosome partition</keyword>
<keyword id="KW-0175">Coiled coil</keyword>
<keyword id="KW-0963">Cytoplasm</keyword>
<keyword id="KW-0226">DNA condensation</keyword>
<keyword id="KW-0238">DNA-binding</keyword>
<keyword id="KW-0547">Nucleotide-binding</keyword>
<sequence length="1496" mass="170757">MTDTNELFEDQTTALQNSAPIAPLANPQHTVSRGKFRSLTLINWNGFFARTFDLDELVTTLSGGNGAGKSTTMAGFVTALIPDLTLLNFRNTTEAGSTSSSRDKGLYGKLKAGVCYAVLESLNSRGQRVITGVRLQQVAGRDKKVDIRSFSLQNVPMSDSIISVLTEQVGEKARVLPLADLKDKFDGSEVVFKQYHSITDYHSFMFDLGVIPKRLRSSADRSKFYKLIEASLYGGISSVITKSLRDYLLPENTGVRQAFQDMESALRENRMTLEAIKVTQSDRDMFKRLITESTNYVSADYMRNANERRGNVQIALEQRRAWYESKSKLELEQQRLIEFSREVADISENESSLEAEYNSANDHLNLVMNALRHQEKIERYQDEVAELNEKLEEQQIALEEVSEQVETAQARADDADDQVEELRSQMADYQQALDAQQTRALQYQQAIAALEKAKQLCGLPHLDLHNVEDYHAEFAAQADDLTDQVFELEQRLSVSDMAKTQFEKAYELVCKISGEIDRSEAWDEARSLLTAFTDQKMQATQAVALRQKLADLEQRLHQQQNAERLLAEFNQKAQTQFETAEELEGYFEQQQARLEDVEAELAEFVEVRSTQRQQREQLNQQYNQLAKTAPAWHTAQSALARLEEQCGEKFEASQSVMQFMQNMLTKEREATLARDKLARREAALDAQITRLSQPDGSDDVRLNQLAERFGGVLLSELYDDVSIDDAPYFSALYGEARHAIVVRDLESVKSQLEKLDDCPTDLYLIEGDPSAFDDAVFTAEELAEGVVVKVSDRQWRYSKFPEVPLFGRAAREKHLETLKAERDEVSEQHAERAFDVQKCQRLHQHLSQFVGTHLSLAFQPNPEEQMQEIAAERTEIERELNQAAGNEQQLRSQLDSAKAKLQMLNKILPLVSLLEDETLADRAEECRAQLDEAEEDEQFVRQFGNYLTQLEPIAASLKSDPAKFEQLEQDYRQAKAEQKQVQQKVFALSDVIQRRVHFSYEEAIGSEGSALTEQLRTRLENAQREREQARDQLRQAQAQFTQYNQVLTGLRSSCDAKTQMLQELIREIDDLGVRGDIGAEERARSRRDELQQRLSQQRSRKGYLDKQLGTIEAEIDNLTRTLRKAERDYHTQRELVVQAKVSWCLVLKLSRNSDVEKRLNRRELAYQSAEELRSISDKALGALRTAVADNEYLRDSLRASEDSRKPENKVAFFIAVYQHLRERIRQDIIKTDDPIDAIEQMEIELSRLTNELTSREKKLAISAESVANILRKTIQREQNRILQLNQGLQNIAFGQVKGVRLVVNIRDTHAILLNALSNGREEHKDLFDSQKLSFSEALAMLYKRVNPHIEMGQRTPQTIGEELLDYRNYLDLEVETFRGADGWMRAESSALSTGEAIGTGMSILLMVVQSWEEESRRMRAKDILPSRLLFLDEAARLDATSINTLFELCERLDMQLLIAAPENISPERGTTYKLVRKITNNQEYVHVVGLKGFGQQ</sequence>
<feature type="chain" id="PRO_1000187465" description="Chromosome partition protein MukB">
    <location>
        <begin position="1"/>
        <end position="1496"/>
    </location>
</feature>
<feature type="region of interest" description="Flexible hinge" evidence="1">
    <location>
        <begin position="694"/>
        <end position="811"/>
    </location>
</feature>
<feature type="region of interest" description="Disordered" evidence="2">
    <location>
        <begin position="1082"/>
        <end position="1101"/>
    </location>
</feature>
<feature type="coiled-coil region" evidence="1">
    <location>
        <begin position="328"/>
        <end position="493"/>
    </location>
</feature>
<feature type="coiled-coil region" evidence="1">
    <location>
        <begin position="536"/>
        <end position="632"/>
    </location>
</feature>
<feature type="coiled-coil region" evidence="1">
    <location>
        <begin position="861"/>
        <end position="1171"/>
    </location>
</feature>
<feature type="coiled-coil region" evidence="1">
    <location>
        <begin position="1235"/>
        <end position="1291"/>
    </location>
</feature>
<feature type="compositionally biased region" description="Basic and acidic residues" evidence="2">
    <location>
        <begin position="1082"/>
        <end position="1091"/>
    </location>
</feature>
<feature type="binding site" evidence="1">
    <location>
        <begin position="63"/>
        <end position="70"/>
    </location>
    <ligand>
        <name>ATP</name>
        <dbReference type="ChEBI" id="CHEBI:30616"/>
    </ligand>
</feature>
<name>MUKB_ACTPJ</name>
<gene>
    <name evidence="1" type="primary">mukB</name>
    <name type="ordered locus">APJL_0574</name>
</gene>
<protein>
    <recommendedName>
        <fullName evidence="1">Chromosome partition protein MukB</fullName>
    </recommendedName>
    <alternativeName>
        <fullName evidence="1">Structural maintenance of chromosome-related protein</fullName>
    </alternativeName>
</protein>
<proteinExistence type="inferred from homology"/>